<name>Y1848_RHIEC</name>
<proteinExistence type="inferred from homology"/>
<accession>Q2K946</accession>
<protein>
    <recommendedName>
        <fullName>UPF0758 protein RHE_CH01848</fullName>
    </recommendedName>
</protein>
<gene>
    <name type="ordered locus">RHE_CH01848</name>
</gene>
<comment type="similarity">
    <text evidence="3">Belongs to the UPF0758 family.</text>
</comment>
<sequence>MAKGPVATSSDDELPFETEEPVADERSFFGGRPQKPAARNLRPALTASLAAPEHYHGHRERLRDRFRELGDTALADYEILELLLFRLIPRRDTKPIAKALIERFGSLAGVFGAPAALLTEVKGVGENVALDLKLIATVAHRTLKSEIRSKQVLSSWSSVIQYCHAAMAHETREQFRILFLDKRNVLIADEVQGRGTVDHTPVYPREVVKRALELSATAIILVHNHPSGDPTPSRADIDMTKVIIEAAKALDITVHDHIIIGKDGHVSLKGLKLI</sequence>
<feature type="chain" id="PRO_1000116363" description="UPF0758 protein RHE_CH01848">
    <location>
        <begin position="1"/>
        <end position="274"/>
    </location>
</feature>
<feature type="domain" description="MPN" evidence="1">
    <location>
        <begin position="152"/>
        <end position="274"/>
    </location>
</feature>
<feature type="region of interest" description="Disordered" evidence="2">
    <location>
        <begin position="1"/>
        <end position="37"/>
    </location>
</feature>
<feature type="short sequence motif" description="JAMM motif" evidence="1">
    <location>
        <begin position="223"/>
        <end position="236"/>
    </location>
</feature>
<feature type="compositionally biased region" description="Acidic residues" evidence="2">
    <location>
        <begin position="10"/>
        <end position="22"/>
    </location>
</feature>
<feature type="binding site" evidence="1">
    <location>
        <position position="223"/>
    </location>
    <ligand>
        <name>Zn(2+)</name>
        <dbReference type="ChEBI" id="CHEBI:29105"/>
        <note>catalytic</note>
    </ligand>
</feature>
<feature type="binding site" evidence="1">
    <location>
        <position position="225"/>
    </location>
    <ligand>
        <name>Zn(2+)</name>
        <dbReference type="ChEBI" id="CHEBI:29105"/>
        <note>catalytic</note>
    </ligand>
</feature>
<feature type="binding site" evidence="1">
    <location>
        <position position="236"/>
    </location>
    <ligand>
        <name>Zn(2+)</name>
        <dbReference type="ChEBI" id="CHEBI:29105"/>
        <note>catalytic</note>
    </ligand>
</feature>
<organism>
    <name type="scientific">Rhizobium etli (strain ATCC 51251 / DSM 11541 / JCM 21823 / NBRC 15573 / CFN 42)</name>
    <dbReference type="NCBI Taxonomy" id="347834"/>
    <lineage>
        <taxon>Bacteria</taxon>
        <taxon>Pseudomonadati</taxon>
        <taxon>Pseudomonadota</taxon>
        <taxon>Alphaproteobacteria</taxon>
        <taxon>Hyphomicrobiales</taxon>
        <taxon>Rhizobiaceae</taxon>
        <taxon>Rhizobium/Agrobacterium group</taxon>
        <taxon>Rhizobium</taxon>
    </lineage>
</organism>
<keyword id="KW-0378">Hydrolase</keyword>
<keyword id="KW-0479">Metal-binding</keyword>
<keyword id="KW-0482">Metalloprotease</keyword>
<keyword id="KW-0645">Protease</keyword>
<keyword id="KW-1185">Reference proteome</keyword>
<keyword id="KW-0862">Zinc</keyword>
<evidence type="ECO:0000255" key="1">
    <source>
        <dbReference type="PROSITE-ProRule" id="PRU01182"/>
    </source>
</evidence>
<evidence type="ECO:0000256" key="2">
    <source>
        <dbReference type="SAM" id="MobiDB-lite"/>
    </source>
</evidence>
<evidence type="ECO:0000305" key="3"/>
<dbReference type="EMBL" id="CP000133">
    <property type="protein sequence ID" value="ABC90640.1"/>
    <property type="molecule type" value="Genomic_DNA"/>
</dbReference>
<dbReference type="RefSeq" id="WP_011425136.1">
    <property type="nucleotide sequence ID" value="NC_007761.1"/>
</dbReference>
<dbReference type="SMR" id="Q2K946"/>
<dbReference type="KEGG" id="ret:RHE_CH01848"/>
<dbReference type="eggNOG" id="COG2003">
    <property type="taxonomic scope" value="Bacteria"/>
</dbReference>
<dbReference type="HOGENOM" id="CLU_073529_0_0_5"/>
<dbReference type="OrthoDB" id="9804482at2"/>
<dbReference type="Proteomes" id="UP000001936">
    <property type="component" value="Chromosome"/>
</dbReference>
<dbReference type="GO" id="GO:0046872">
    <property type="term" value="F:metal ion binding"/>
    <property type="evidence" value="ECO:0007669"/>
    <property type="project" value="UniProtKB-KW"/>
</dbReference>
<dbReference type="GO" id="GO:0008237">
    <property type="term" value="F:metallopeptidase activity"/>
    <property type="evidence" value="ECO:0007669"/>
    <property type="project" value="UniProtKB-KW"/>
</dbReference>
<dbReference type="GO" id="GO:0006508">
    <property type="term" value="P:proteolysis"/>
    <property type="evidence" value="ECO:0007669"/>
    <property type="project" value="UniProtKB-KW"/>
</dbReference>
<dbReference type="CDD" id="cd08071">
    <property type="entry name" value="MPN_DUF2466"/>
    <property type="match status" value="1"/>
</dbReference>
<dbReference type="Gene3D" id="1.10.150.20">
    <property type="entry name" value="5' to 3' exonuclease, C-terminal subdomain"/>
    <property type="match status" value="1"/>
</dbReference>
<dbReference type="Gene3D" id="3.40.140.10">
    <property type="entry name" value="Cytidine Deaminase, domain 2"/>
    <property type="match status" value="1"/>
</dbReference>
<dbReference type="InterPro" id="IPR037518">
    <property type="entry name" value="MPN"/>
</dbReference>
<dbReference type="InterPro" id="IPR025657">
    <property type="entry name" value="RadC_JAB"/>
</dbReference>
<dbReference type="InterPro" id="IPR010994">
    <property type="entry name" value="RuvA_2-like"/>
</dbReference>
<dbReference type="InterPro" id="IPR001405">
    <property type="entry name" value="UPF0758"/>
</dbReference>
<dbReference type="InterPro" id="IPR020891">
    <property type="entry name" value="UPF0758_CS"/>
</dbReference>
<dbReference type="NCBIfam" id="NF000642">
    <property type="entry name" value="PRK00024.1"/>
    <property type="match status" value="1"/>
</dbReference>
<dbReference type="NCBIfam" id="TIGR00608">
    <property type="entry name" value="radc"/>
    <property type="match status" value="1"/>
</dbReference>
<dbReference type="PANTHER" id="PTHR30471">
    <property type="entry name" value="DNA REPAIR PROTEIN RADC"/>
    <property type="match status" value="1"/>
</dbReference>
<dbReference type="PANTHER" id="PTHR30471:SF3">
    <property type="entry name" value="UPF0758 PROTEIN YEES-RELATED"/>
    <property type="match status" value="1"/>
</dbReference>
<dbReference type="Pfam" id="PF04002">
    <property type="entry name" value="RadC"/>
    <property type="match status" value="1"/>
</dbReference>
<dbReference type="SUPFAM" id="SSF102712">
    <property type="entry name" value="JAB1/MPN domain"/>
    <property type="match status" value="1"/>
</dbReference>
<dbReference type="SUPFAM" id="SSF47781">
    <property type="entry name" value="RuvA domain 2-like"/>
    <property type="match status" value="1"/>
</dbReference>
<dbReference type="PROSITE" id="PS50249">
    <property type="entry name" value="MPN"/>
    <property type="match status" value="1"/>
</dbReference>
<dbReference type="PROSITE" id="PS01302">
    <property type="entry name" value="UPF0758"/>
    <property type="match status" value="1"/>
</dbReference>
<reference key="1">
    <citation type="journal article" date="2006" name="Proc. Natl. Acad. Sci. U.S.A.">
        <title>The partitioned Rhizobium etli genome: genetic and metabolic redundancy in seven interacting replicons.</title>
        <authorList>
            <person name="Gonzalez V."/>
            <person name="Santamaria R.I."/>
            <person name="Bustos P."/>
            <person name="Hernandez-Gonzalez I."/>
            <person name="Medrano-Soto A."/>
            <person name="Moreno-Hagelsieb G."/>
            <person name="Janga S.C."/>
            <person name="Ramirez M.A."/>
            <person name="Jimenez-Jacinto V."/>
            <person name="Collado-Vides J."/>
            <person name="Davila G."/>
        </authorList>
    </citation>
    <scope>NUCLEOTIDE SEQUENCE [LARGE SCALE GENOMIC DNA]</scope>
    <source>
        <strain>ATCC 51251 / DSM 11541 / JCM 21823 / NBRC 15573 / CFN 42</strain>
    </source>
</reference>